<protein>
    <recommendedName>
        <fullName>Receptor like protein kinase S.2</fullName>
        <shortName>LecRK-S.2</shortName>
        <ecNumber>2.7.11.1</ecNumber>
    </recommendedName>
</protein>
<comment type="catalytic activity">
    <reaction>
        <text>L-seryl-[protein] + ATP = O-phospho-L-seryl-[protein] + ADP + H(+)</text>
        <dbReference type="Rhea" id="RHEA:17989"/>
        <dbReference type="Rhea" id="RHEA-COMP:9863"/>
        <dbReference type="Rhea" id="RHEA-COMP:11604"/>
        <dbReference type="ChEBI" id="CHEBI:15378"/>
        <dbReference type="ChEBI" id="CHEBI:29999"/>
        <dbReference type="ChEBI" id="CHEBI:30616"/>
        <dbReference type="ChEBI" id="CHEBI:83421"/>
        <dbReference type="ChEBI" id="CHEBI:456216"/>
        <dbReference type="EC" id="2.7.11.1"/>
    </reaction>
</comment>
<comment type="catalytic activity">
    <reaction>
        <text>L-threonyl-[protein] + ATP = O-phospho-L-threonyl-[protein] + ADP + H(+)</text>
        <dbReference type="Rhea" id="RHEA:46608"/>
        <dbReference type="Rhea" id="RHEA-COMP:11060"/>
        <dbReference type="Rhea" id="RHEA-COMP:11605"/>
        <dbReference type="ChEBI" id="CHEBI:15378"/>
        <dbReference type="ChEBI" id="CHEBI:30013"/>
        <dbReference type="ChEBI" id="CHEBI:30616"/>
        <dbReference type="ChEBI" id="CHEBI:61977"/>
        <dbReference type="ChEBI" id="CHEBI:456216"/>
        <dbReference type="EC" id="2.7.11.1"/>
    </reaction>
</comment>
<comment type="induction">
    <text evidence="4">Rapidly induced after both compatible and incompatible pathogen inoculations (e.g. Xanthomonas campestris pv. campestris and Pseudomonas syringae pv. tomato). Weakly and transiently induced in response to wounding, salicylic acid (SA) and jasmonic acid (JA).</text>
</comment>
<comment type="similarity">
    <text evidence="1">Belongs to the protein kinase superfamily. Ser/Thr protein kinase family.</text>
</comment>
<comment type="sequence caution" evidence="5">
    <conflict type="erroneous initiation">
        <sequence resource="EMBL-CDS" id="AAC04483"/>
    </conflict>
    <text>Truncated N-terminus.</text>
</comment>
<comment type="sequence caution" evidence="5">
    <conflict type="erroneous initiation">
        <sequence resource="EMBL-CDS" id="CAA08772"/>
    </conflict>
    <text>Extended N-terminus.</text>
</comment>
<organism>
    <name type="scientific">Arabidopsis thaliana</name>
    <name type="common">Mouse-ear cress</name>
    <dbReference type="NCBI Taxonomy" id="3702"/>
    <lineage>
        <taxon>Eukaryota</taxon>
        <taxon>Viridiplantae</taxon>
        <taxon>Streptophyta</taxon>
        <taxon>Embryophyta</taxon>
        <taxon>Tracheophyta</taxon>
        <taxon>Spermatophyta</taxon>
        <taxon>Magnoliopsida</taxon>
        <taxon>eudicotyledons</taxon>
        <taxon>Gunneridae</taxon>
        <taxon>Pentapetalae</taxon>
        <taxon>rosids</taxon>
        <taxon>malvids</taxon>
        <taxon>Brassicales</taxon>
        <taxon>Brassicaceae</taxon>
        <taxon>Camelineae</taxon>
        <taxon>Arabidopsis</taxon>
    </lineage>
</organism>
<proteinExistence type="evidence at transcript level"/>
<feature type="chain" id="PRO_0000403333" description="Receptor like protein kinase S.2">
    <location>
        <begin position="1"/>
        <end position="851"/>
    </location>
</feature>
<feature type="domain" description="Protein kinase 1" evidence="1">
    <location>
        <begin position="117"/>
        <end position="436"/>
    </location>
</feature>
<feature type="domain" description="Protein kinase 2" evidence="1">
    <location>
        <begin position="532"/>
        <end position="819"/>
    </location>
</feature>
<feature type="region of interest" description="Disordered" evidence="3">
    <location>
        <begin position="448"/>
        <end position="471"/>
    </location>
</feature>
<feature type="active site" description="Proton acceptor" evidence="1 2">
    <location>
        <position position="248"/>
    </location>
</feature>
<feature type="binding site" evidence="1">
    <location>
        <begin position="123"/>
        <end position="131"/>
    </location>
    <ligand>
        <name>ATP</name>
        <dbReference type="ChEBI" id="CHEBI:30616"/>
    </ligand>
</feature>
<feature type="binding site" evidence="1">
    <location>
        <position position="146"/>
    </location>
    <ligand>
        <name>ATP</name>
        <dbReference type="ChEBI" id="CHEBI:30616"/>
    </ligand>
</feature>
<feature type="binding site" evidence="1">
    <location>
        <begin position="538"/>
        <end position="546"/>
    </location>
    <ligand>
        <name>ATP</name>
        <dbReference type="ChEBI" id="CHEBI:30616"/>
    </ligand>
</feature>
<feature type="binding site" evidence="1">
    <location>
        <position position="560"/>
    </location>
    <ligand>
        <name>ATP</name>
        <dbReference type="ChEBI" id="CHEBI:30616"/>
    </ligand>
</feature>
<feature type="sequence conflict" description="In Ref. 3; CAA08772." evidence="5" ref="3">
    <original>QL</original>
    <variation>HV</variation>
    <location>
        <begin position="169"/>
        <end position="170"/>
    </location>
</feature>
<feature type="sequence conflict" description="In Ref. 3; CAA08772." evidence="5" ref="3">
    <original>F</original>
    <variation>Y</variation>
    <location>
        <position position="297"/>
    </location>
</feature>
<accession>O48837</accession>
<accession>O82658</accession>
<name>LRKS2_ARATH</name>
<dbReference type="EC" id="2.7.11.1"/>
<dbReference type="EMBL" id="AC003974">
    <property type="protein sequence ID" value="AAC04483.1"/>
    <property type="status" value="ALT_INIT"/>
    <property type="molecule type" value="Genomic_DNA"/>
</dbReference>
<dbReference type="EMBL" id="CP002685">
    <property type="protein sequence ID" value="AEC08743.1"/>
    <property type="molecule type" value="Genomic_DNA"/>
</dbReference>
<dbReference type="EMBL" id="AJ009671">
    <property type="protein sequence ID" value="CAA08772.1"/>
    <property type="status" value="ALT_INIT"/>
    <property type="molecule type" value="Genomic_DNA"/>
</dbReference>
<dbReference type="EMBL" id="AF370599">
    <property type="protein sequence ID" value="AAK43918.1"/>
    <property type="molecule type" value="mRNA"/>
</dbReference>
<dbReference type="PIR" id="T00788">
    <property type="entry name" value="T00788"/>
</dbReference>
<dbReference type="RefSeq" id="NP_180839.2">
    <property type="nucleotide sequence ID" value="NM_128840.3"/>
</dbReference>
<dbReference type="SMR" id="O48837"/>
<dbReference type="FunCoup" id="O48837">
    <property type="interactions" value="229"/>
</dbReference>
<dbReference type="STRING" id="3702.O48837"/>
<dbReference type="GlyGen" id="O48837">
    <property type="glycosylation" value="1 site"/>
</dbReference>
<dbReference type="iPTMnet" id="O48837"/>
<dbReference type="PaxDb" id="3702-AT2G32800.1"/>
<dbReference type="ProteomicsDB" id="238431"/>
<dbReference type="EnsemblPlants" id="AT2G32800.1">
    <property type="protein sequence ID" value="AT2G32800.1"/>
    <property type="gene ID" value="AT2G32800"/>
</dbReference>
<dbReference type="GeneID" id="817841"/>
<dbReference type="Gramene" id="AT2G32800.1">
    <property type="protein sequence ID" value="AT2G32800.1"/>
    <property type="gene ID" value="AT2G32800"/>
</dbReference>
<dbReference type="KEGG" id="ath:AT2G32800"/>
<dbReference type="Araport" id="AT2G32800"/>
<dbReference type="TAIR" id="AT2G32800">
    <property type="gene designation" value="LECRK-S.2"/>
</dbReference>
<dbReference type="eggNOG" id="KOG1187">
    <property type="taxonomic scope" value="Eukaryota"/>
</dbReference>
<dbReference type="HOGENOM" id="CLU_016867_0_0_1"/>
<dbReference type="InParanoid" id="O48837"/>
<dbReference type="OMA" id="TMKWVME"/>
<dbReference type="PhylomeDB" id="O48837"/>
<dbReference type="PRO" id="PR:O48837"/>
<dbReference type="Proteomes" id="UP000006548">
    <property type="component" value="Chromosome 2"/>
</dbReference>
<dbReference type="ExpressionAtlas" id="O48837">
    <property type="expression patterns" value="baseline and differential"/>
</dbReference>
<dbReference type="GO" id="GO:0005524">
    <property type="term" value="F:ATP binding"/>
    <property type="evidence" value="ECO:0007669"/>
    <property type="project" value="UniProtKB-KW"/>
</dbReference>
<dbReference type="GO" id="GO:0106310">
    <property type="term" value="F:protein serine kinase activity"/>
    <property type="evidence" value="ECO:0007669"/>
    <property type="project" value="RHEA"/>
</dbReference>
<dbReference type="GO" id="GO:0004674">
    <property type="term" value="F:protein serine/threonine kinase activity"/>
    <property type="evidence" value="ECO:0007669"/>
    <property type="project" value="UniProtKB-KW"/>
</dbReference>
<dbReference type="GO" id="GO:0071395">
    <property type="term" value="P:cellular response to jasmonic acid stimulus"/>
    <property type="evidence" value="ECO:0000270"/>
    <property type="project" value="UniProtKB"/>
</dbReference>
<dbReference type="GO" id="GO:0071446">
    <property type="term" value="P:cellular response to salicylic acid stimulus"/>
    <property type="evidence" value="ECO:0000270"/>
    <property type="project" value="UniProtKB"/>
</dbReference>
<dbReference type="GO" id="GO:0009617">
    <property type="term" value="P:response to bacterium"/>
    <property type="evidence" value="ECO:0000270"/>
    <property type="project" value="UniProtKB"/>
</dbReference>
<dbReference type="GO" id="GO:0009611">
    <property type="term" value="P:response to wounding"/>
    <property type="evidence" value="ECO:0000270"/>
    <property type="project" value="UniProtKB"/>
</dbReference>
<dbReference type="CDD" id="cd14066">
    <property type="entry name" value="STKc_IRAK"/>
    <property type="match status" value="1"/>
</dbReference>
<dbReference type="FunFam" id="1.10.510.10:FF:000603">
    <property type="entry name" value="Receptor like protein kinase S.2"/>
    <property type="match status" value="1"/>
</dbReference>
<dbReference type="FunFam" id="1.10.510.10:FF:000723">
    <property type="entry name" value="Receptor like protein kinase S.2"/>
    <property type="match status" value="1"/>
</dbReference>
<dbReference type="FunFam" id="3.30.200.20:FF:000532">
    <property type="entry name" value="Receptor like protein kinase S.2"/>
    <property type="match status" value="1"/>
</dbReference>
<dbReference type="Gene3D" id="3.30.200.20">
    <property type="entry name" value="Phosphorylase Kinase, domain 1"/>
    <property type="match status" value="2"/>
</dbReference>
<dbReference type="Gene3D" id="1.10.510.10">
    <property type="entry name" value="Transferase(Phosphotransferase) domain 1"/>
    <property type="match status" value="2"/>
</dbReference>
<dbReference type="InterPro" id="IPR011009">
    <property type="entry name" value="Kinase-like_dom_sf"/>
</dbReference>
<dbReference type="InterPro" id="IPR050528">
    <property type="entry name" value="L-type_Lectin-RKs"/>
</dbReference>
<dbReference type="InterPro" id="IPR000719">
    <property type="entry name" value="Prot_kinase_dom"/>
</dbReference>
<dbReference type="InterPro" id="IPR017441">
    <property type="entry name" value="Protein_kinase_ATP_BS"/>
</dbReference>
<dbReference type="InterPro" id="IPR001245">
    <property type="entry name" value="Ser-Thr/Tyr_kinase_cat_dom"/>
</dbReference>
<dbReference type="InterPro" id="IPR008271">
    <property type="entry name" value="Ser/Thr_kinase_AS"/>
</dbReference>
<dbReference type="PANTHER" id="PTHR27007">
    <property type="match status" value="1"/>
</dbReference>
<dbReference type="Pfam" id="PF07714">
    <property type="entry name" value="PK_Tyr_Ser-Thr"/>
    <property type="match status" value="1"/>
</dbReference>
<dbReference type="Pfam" id="PF00069">
    <property type="entry name" value="Pkinase"/>
    <property type="match status" value="1"/>
</dbReference>
<dbReference type="SMART" id="SM00220">
    <property type="entry name" value="S_TKc"/>
    <property type="match status" value="2"/>
</dbReference>
<dbReference type="SUPFAM" id="SSF56112">
    <property type="entry name" value="Protein kinase-like (PK-like)"/>
    <property type="match status" value="2"/>
</dbReference>
<dbReference type="PROSITE" id="PS00107">
    <property type="entry name" value="PROTEIN_KINASE_ATP"/>
    <property type="match status" value="1"/>
</dbReference>
<dbReference type="PROSITE" id="PS50011">
    <property type="entry name" value="PROTEIN_KINASE_DOM"/>
    <property type="match status" value="2"/>
</dbReference>
<dbReference type="PROSITE" id="PS00108">
    <property type="entry name" value="PROTEIN_KINASE_ST"/>
    <property type="match status" value="1"/>
</dbReference>
<keyword id="KW-0067">ATP-binding</keyword>
<keyword id="KW-0418">Kinase</keyword>
<keyword id="KW-0547">Nucleotide-binding</keyword>
<keyword id="KW-1185">Reference proteome</keyword>
<keyword id="KW-0677">Repeat</keyword>
<keyword id="KW-0723">Serine/threonine-protein kinase</keyword>
<keyword id="KW-0808">Transferase</keyword>
<gene>
    <name type="primary">LECRKS2</name>
    <name type="synonym">AP4.3A</name>
    <name type="ordered locus">At2g32800</name>
    <name type="ORF">F24L7.6</name>
</gene>
<evidence type="ECO:0000255" key="1">
    <source>
        <dbReference type="PROSITE-ProRule" id="PRU00159"/>
    </source>
</evidence>
<evidence type="ECO:0000255" key="2">
    <source>
        <dbReference type="PROSITE-ProRule" id="PRU10027"/>
    </source>
</evidence>
<evidence type="ECO:0000256" key="3">
    <source>
        <dbReference type="SAM" id="MobiDB-lite"/>
    </source>
</evidence>
<evidence type="ECO:0000269" key="4">
    <source>
    </source>
</evidence>
<evidence type="ECO:0000305" key="5"/>
<sequence>MAPMAMDHLCFVLPTESGELKPPVMVEETTEEEEEKKSRDCGRQVVSLIGDLFRRLHGSKLVKSLNLCSINESKDSISMEINKSFTDMEGVQLSSKVGCENPRIFGYSELYIGTNGFSDELILGSGGFGRVYKALLPSDGTTVAVKCLAEKKGEQFEKTFAAELVAVAQLRHRNLVKLRGWCLHEDELLLVYDYMPNRSLDRVLFRRPEVNSDFKPLDWDRRGKIVKGLAAALFYLHEQLETQIIHRDVKTSNVMLDSEFNAKLGDFGLARWLEHKIDETEHDSSYDSVSSFRNHQFRVADSTRIGGTIGYLPPESFRKKTVATAKTDVFSFGVVVLEVVSGRRAVDLSFSEDKIILLDWVRRLSDNRKLLDAGDSRLAKGSYDLSDMKRMIHLALLCSLNNPTHRPNMKWVIGALSGEFSGNLPALPSFKSHPLYIPLSSLKSTSTSATTTTTRTTMTTTTSTTSFNASSESTPSSNYVTALEDSIYQTAETGENPYFNYNSRRVMSSKSFVLDTPREISYNDLVLATDNFSDARRVAEVDFGTAYYGLLNGDQHIVVKRLGMTKCPALVTRFSTELLNLGRLRHRNLVMLRGWCTEHGEMLVVYDYSANRKLSHLLFHNHIPGNSVLRWKSRYNVIKSLACAVRYLHEEWDEQVIHRNITSSTIFLDRDMNPRLCGFALAEFLSRNDKAHQAAKKKGSAQGIFGYMAPEYMESGEATTMADVYSFGVVVLEMVTGQPAVDYKRKKEDALMVLRIREVVGNRKKLLEEIADIHLDDEYENRELARLLRLGLVCTRTDPKLRPSISQVVSILDGSERFFEEEGGKEGDVSRKQMYDSSMLMIRQMQALGIH</sequence>
<reference key="1">
    <citation type="journal article" date="1999" name="Nature">
        <title>Sequence and analysis of chromosome 2 of the plant Arabidopsis thaliana.</title>
        <authorList>
            <person name="Lin X."/>
            <person name="Kaul S."/>
            <person name="Rounsley S.D."/>
            <person name="Shea T.P."/>
            <person name="Benito M.-I."/>
            <person name="Town C.D."/>
            <person name="Fujii C.Y."/>
            <person name="Mason T.M."/>
            <person name="Bowman C.L."/>
            <person name="Barnstead M.E."/>
            <person name="Feldblyum T.V."/>
            <person name="Buell C.R."/>
            <person name="Ketchum K.A."/>
            <person name="Lee J.J."/>
            <person name="Ronning C.M."/>
            <person name="Koo H.L."/>
            <person name="Moffat K.S."/>
            <person name="Cronin L.A."/>
            <person name="Shen M."/>
            <person name="Pai G."/>
            <person name="Van Aken S."/>
            <person name="Umayam L."/>
            <person name="Tallon L.J."/>
            <person name="Gill J.E."/>
            <person name="Adams M.D."/>
            <person name="Carrera A.J."/>
            <person name="Creasy T.H."/>
            <person name="Goodman H.M."/>
            <person name="Somerville C.R."/>
            <person name="Copenhaver G.P."/>
            <person name="Preuss D."/>
            <person name="Nierman W.C."/>
            <person name="White O."/>
            <person name="Eisen J.A."/>
            <person name="Salzberg S.L."/>
            <person name="Fraser C.M."/>
            <person name="Venter J.C."/>
        </authorList>
    </citation>
    <scope>NUCLEOTIDE SEQUENCE [LARGE SCALE GENOMIC DNA]</scope>
    <source>
        <strain>cv. Columbia</strain>
    </source>
</reference>
<reference key="2">
    <citation type="journal article" date="2017" name="Plant J.">
        <title>Araport11: a complete reannotation of the Arabidopsis thaliana reference genome.</title>
        <authorList>
            <person name="Cheng C.Y."/>
            <person name="Krishnakumar V."/>
            <person name="Chan A.P."/>
            <person name="Thibaud-Nissen F."/>
            <person name="Schobel S."/>
            <person name="Town C.D."/>
        </authorList>
    </citation>
    <scope>GENOME REANNOTATION</scope>
    <source>
        <strain>cv. Columbia</strain>
    </source>
</reference>
<reference key="3">
    <citation type="journal article" date="1998" name="FEBS Lett.">
        <title>Characterization of early induced genes in Arabidopsis thaliana responding to bacterial inoculation: identification of centrin and of a novel protein with two regions related to kinase domains.</title>
        <authorList>
            <person name="Cordeiro M.C.R."/>
            <person name="Piqueras R."/>
            <person name="de Oliveira D.E."/>
            <person name="Castresana C."/>
        </authorList>
    </citation>
    <scope>NUCLEOTIDE SEQUENCE [GENOMIC DNA] OF 1-509</scope>
    <scope>INDUCTION BY PATHOGENS AND ABIOTIC STRESSES</scope>
    <source>
        <strain>cv. Columbia</strain>
    </source>
</reference>
<reference key="4">
    <citation type="journal article" date="2003" name="Science">
        <title>Empirical analysis of transcriptional activity in the Arabidopsis genome.</title>
        <authorList>
            <person name="Yamada K."/>
            <person name="Lim J."/>
            <person name="Dale J.M."/>
            <person name="Chen H."/>
            <person name="Shinn P."/>
            <person name="Palm C.J."/>
            <person name="Southwick A.M."/>
            <person name="Wu H.C."/>
            <person name="Kim C.J."/>
            <person name="Nguyen M."/>
            <person name="Pham P.K."/>
            <person name="Cheuk R.F."/>
            <person name="Karlin-Newmann G."/>
            <person name="Liu S.X."/>
            <person name="Lam B."/>
            <person name="Sakano H."/>
            <person name="Wu T."/>
            <person name="Yu G."/>
            <person name="Miranda M."/>
            <person name="Quach H.L."/>
            <person name="Tripp M."/>
            <person name="Chang C.H."/>
            <person name="Lee J.M."/>
            <person name="Toriumi M.J."/>
            <person name="Chan M.M."/>
            <person name="Tang C.C."/>
            <person name="Onodera C.S."/>
            <person name="Deng J.M."/>
            <person name="Akiyama K."/>
            <person name="Ansari Y."/>
            <person name="Arakawa T."/>
            <person name="Banh J."/>
            <person name="Banno F."/>
            <person name="Bowser L."/>
            <person name="Brooks S.Y."/>
            <person name="Carninci P."/>
            <person name="Chao Q."/>
            <person name="Choy N."/>
            <person name="Enju A."/>
            <person name="Goldsmith A.D."/>
            <person name="Gurjal M."/>
            <person name="Hansen N.F."/>
            <person name="Hayashizaki Y."/>
            <person name="Johnson-Hopson C."/>
            <person name="Hsuan V.W."/>
            <person name="Iida K."/>
            <person name="Karnes M."/>
            <person name="Khan S."/>
            <person name="Koesema E."/>
            <person name="Ishida J."/>
            <person name="Jiang P.X."/>
            <person name="Jones T."/>
            <person name="Kawai J."/>
            <person name="Kamiya A."/>
            <person name="Meyers C."/>
            <person name="Nakajima M."/>
            <person name="Narusaka M."/>
            <person name="Seki M."/>
            <person name="Sakurai T."/>
            <person name="Satou M."/>
            <person name="Tamse R."/>
            <person name="Vaysberg M."/>
            <person name="Wallender E.K."/>
            <person name="Wong C."/>
            <person name="Yamamura Y."/>
            <person name="Yuan S."/>
            <person name="Shinozaki K."/>
            <person name="Davis R.W."/>
            <person name="Theologis A."/>
            <person name="Ecker J.R."/>
        </authorList>
    </citation>
    <scope>NUCLEOTIDE SEQUENCE [LARGE SCALE MRNA] OF 3-851</scope>
    <source>
        <strain>cv. Columbia</strain>
    </source>
</reference>
<reference key="5">
    <citation type="journal article" date="2009" name="J. Exp. Bot.">
        <title>Arabidopsis L-type lectin receptor kinases: phylogeny, classification, and expression profiles.</title>
        <authorList>
            <person name="Bouwmeester K."/>
            <person name="Govers F."/>
        </authorList>
    </citation>
    <scope>GENE FAMILY</scope>
    <scope>NOMENCLATURE</scope>
</reference>